<sequence>MAEMKSPTKAEPATPAEAAQSDRHSLLEHSREFLDFFWDIAKPDQETRLRATEKLLEYLRTRPNDSEMKYALKRLITGLGVGREAARPCYSLALAQLLQSFEDIPLCDILDQIQEKYSLQAMNKAMMRPSLFANLFGVLALFQSGRLVKDKEALMKSVQLLKILSQHPNHLQGQPIKALVDILSEVPESMFQEILPKVLKGNMKVILRSPKYLELFLLAKQRVPTKLESLMGSVDLFSEDNIPSLVNILKVAANSVKKEHKLPNVALDLLRLALKESRFELFWKKVLEEGLLKNPSWTSSYMCFRLLGASLPLLSEEQLQLVMRGDLIRHFGENMVISKPQNLFKIIPEISTYVGTFLEGCQDDPKRQLTMMVAFTTITNQGLPVMPTFWRVTRFLNAEALQSYVAWLRDMFLQPDLNSLVDFSTANQKRAQDASLNVPERAVFRLRKWIIHRLVSLVDHLHLEKDEAVVEQIARFCLFHAFFKTKKATPQIPETKQHFSFPLDDRNRGVFVSAFFSLLQTLSVKFRQTPDLAENGKPWTYRLVQLADMLLNHNRNVTSVTSLTTQQRQAWDQMMSTLKELEARSSETRAIAFQHLLLLVGLHIFKSPAESCDVLGDIQTCIKKSMEQNPRRSRSRAKASQEPVWVEVMVEILLSLLAQPSNLMRQVVRSVFGHICPHLTPRCLQLILAVLSPVTNEDEDDNVVVTDDADEKQLQHGEDEDSDNEDNKNSESDMDSEDGEESEEEDRDKDVDPGFRQQLMEVLKAGNALGGVDNEEEEELGDEAMMALDQNLASLFKEQKMRIQARNEEKNKLQKEKKLRRDFQIRALDLIEVLVTKQPEHPLILELLEPLLNVIQHSMRSKGSTKQEQDLLHKTARIFMHHLCRARRYCHEVGPCAEALHAQVERLVQQAGSQADASVALYYFNASLYLLRVLKGNTNKRHQDGHKLHGADTEDSEDQAANCLDLDFVTRVYSASLESLLTKRNSSLTVPMFLSLFSRYPVICKNLLPVLAQHVAGPSRPRHQAQACLMLQKTLSARELRVCFEDPEWEQLITQLLGKATQTLQTLGEAQSKGEHQKELSILELLNTLLRTVNHEKLSVDLTAPLGVLQSKQQKLQQSLQQGNHSSGSNRLYDLYWQAMRMLGVQRPKSEKKNAKDIPSDTQSPVSTKRKKKGFLPETKKRKKLKSEGTTPEKNAASQQDAVTEGAMPAATGKDQPPSTGKKKRKRVKASTPSQVNGITGAKSPAPSNPTLSPSTPAKTPKLQKKKEKLSQVNGATPVSPIEPESKKHHQEALSTKEVIRKSPHPQSALPKKRARLSLVSRSPSLLQSGVKKRRVASRRVQTP</sequence>
<organism>
    <name type="scientific">Mus musculus</name>
    <name type="common">Mouse</name>
    <dbReference type="NCBI Taxonomy" id="10090"/>
    <lineage>
        <taxon>Eukaryota</taxon>
        <taxon>Metazoa</taxon>
        <taxon>Chordata</taxon>
        <taxon>Craniata</taxon>
        <taxon>Vertebrata</taxon>
        <taxon>Euteleostomi</taxon>
        <taxon>Mammalia</taxon>
        <taxon>Eutheria</taxon>
        <taxon>Euarchontoglires</taxon>
        <taxon>Glires</taxon>
        <taxon>Rodentia</taxon>
        <taxon>Myomorpha</taxon>
        <taxon>Muroidea</taxon>
        <taxon>Muridae</taxon>
        <taxon>Murinae</taxon>
        <taxon>Mus</taxon>
        <taxon>Mus</taxon>
    </lineage>
</organism>
<gene>
    <name type="primary">Mybbp1a</name>
    <name type="synonym">P160</name>
</gene>
<accession>Q7TPV4</accession>
<accession>O35851</accession>
<accession>Q80Y66</accession>
<accession>Q8R4X2</accession>
<accession>Q99KP0</accession>
<keyword id="KW-0007">Acetylation</keyword>
<keyword id="KW-0010">Activator</keyword>
<keyword id="KW-0090">Biological rhythms</keyword>
<keyword id="KW-0164">Citrullination</keyword>
<keyword id="KW-0963">Cytoplasm</keyword>
<keyword id="KW-0903">Direct protein sequencing</keyword>
<keyword id="KW-1017">Isopeptide bond</keyword>
<keyword id="KW-0539">Nucleus</keyword>
<keyword id="KW-0597">Phosphoprotein</keyword>
<keyword id="KW-1185">Reference proteome</keyword>
<keyword id="KW-0678">Repressor</keyword>
<keyword id="KW-0690">Ribosome biogenesis</keyword>
<keyword id="KW-0804">Transcription</keyword>
<keyword id="KW-0805">Transcription regulation</keyword>
<keyword id="KW-0832">Ubl conjugation</keyword>
<name>MBB1A_MOUSE</name>
<protein>
    <recommendedName>
        <fullName>Myb-binding protein 1A</fullName>
    </recommendedName>
    <alternativeName>
        <fullName>Myb-binding protein of 160 kDa</fullName>
    </alternativeName>
</protein>
<comment type="function">
    <text evidence="1 3 5 6 8">May activate or repress transcription via interactions with sequence specific DNA-binding proteins (PubMed:11956195, PubMed:14744933, PubMed:9447996). Repression may be mediated at least in part by histone deacetylase activity (HDAC activity) (PubMed:14744933). Acts as a corepressor and in concert with CRY1, represses the transcription of the core circadian clock component PER2 (PubMed:19129230). Preferentially binds to dimethylated histone H3 'Lys-9' (H3K9me2) on the PER2 promoter (PubMed:19129230). Has a role in rRNA biogenesis together with PWP1 (By similarity).</text>
</comment>
<comment type="subunit">
    <text evidence="1 3 4 5 6 8">Component of the B-WICH complex, at least composed of SMARCA5/SNF2H, BAZ1B/WSTF, SF3B1, DEK, MYO1C, ERCC6, MYBBP1A and DDX21 (By similarity). Binds to and represses JUN and MYB via the leucine zipper regions present in these proteins. Also binds to and represses PPARGC1A: this interaction is abrogated when PPARGC1A is phosphorylated by MAPK1/ERK. Binds to and stimulates transcription by AHR. Binds to KPNA2. Interacts with CLOCK and CRY1.</text>
</comment>
<comment type="interaction">
    <interactant intactId="EBI-1373622">
        <id>Q7TPV4</id>
    </interactant>
    <interactant intactId="EBI-10896863">
        <id>P12813</id>
        <label>Nr4a1</label>
    </interactant>
    <organismsDiffer>false</organismsDiffer>
    <experiments>3</experiments>
</comment>
<comment type="subcellular location">
    <subcellularLocation>
        <location evidence="4">Nucleus</location>
    </subcellularLocation>
    <subcellularLocation>
        <location evidence="4 6">Nucleus</location>
        <location evidence="4 6">Nucleolus</location>
    </subcellularLocation>
    <subcellularLocation>
        <location evidence="4">Cytoplasm</location>
    </subcellularLocation>
    <text evidence="4">Predominantly nucleolar. Also shuttles between the nucleus and cytoplasm. Nuclear import may be mediated by KPNA2, while export appears to depend partially on XPO1/CRM1.</text>
</comment>
<comment type="tissue specificity">
    <text evidence="8">Ubiquitously expressed.</text>
</comment>
<comment type="PTM">
    <text evidence="7">Citrullinated by PADI4.</text>
</comment>
<comment type="similarity">
    <text evidence="9">Belongs to the MYBBP1A family.</text>
</comment>
<proteinExistence type="evidence at protein level"/>
<evidence type="ECO:0000250" key="1">
    <source>
        <dbReference type="UniProtKB" id="Q9BQG0"/>
    </source>
</evidence>
<evidence type="ECO:0000256" key="2">
    <source>
        <dbReference type="SAM" id="MobiDB-lite"/>
    </source>
</evidence>
<evidence type="ECO:0000269" key="3">
    <source>
    </source>
</evidence>
<evidence type="ECO:0000269" key="4">
    <source>
    </source>
</evidence>
<evidence type="ECO:0000269" key="5">
    <source>
    </source>
</evidence>
<evidence type="ECO:0000269" key="6">
    <source>
    </source>
</evidence>
<evidence type="ECO:0000269" key="7">
    <source>
    </source>
</evidence>
<evidence type="ECO:0000269" key="8">
    <source>
    </source>
</evidence>
<evidence type="ECO:0000305" key="9"/>
<evidence type="ECO:0007744" key="10">
    <source>
    </source>
</evidence>
<evidence type="ECO:0007744" key="11">
    <source>
    </source>
</evidence>
<evidence type="ECO:0007744" key="12">
    <source>
    </source>
</evidence>
<evidence type="ECO:0007744" key="13">
    <source>
    </source>
</evidence>
<dbReference type="EMBL" id="U63648">
    <property type="protein sequence ID" value="AAC39954.1"/>
    <property type="molecule type" value="mRNA"/>
</dbReference>
<dbReference type="EMBL" id="AF345640">
    <property type="protein sequence ID" value="AAL83748.1"/>
    <property type="molecule type" value="Genomic_DNA"/>
</dbReference>
<dbReference type="EMBL" id="AL662812">
    <property type="status" value="NOT_ANNOTATED_CDS"/>
    <property type="molecule type" value="Genomic_DNA"/>
</dbReference>
<dbReference type="EMBL" id="BC004078">
    <property type="protein sequence ID" value="AAH04078.1"/>
    <property type="molecule type" value="mRNA"/>
</dbReference>
<dbReference type="EMBL" id="BC048858">
    <property type="protein sequence ID" value="AAH48858.1"/>
    <property type="molecule type" value="mRNA"/>
</dbReference>
<dbReference type="EMBL" id="BC052889">
    <property type="protein sequence ID" value="AAH52889.1"/>
    <property type="molecule type" value="mRNA"/>
</dbReference>
<dbReference type="CCDS" id="CCDS24986.1"/>
<dbReference type="PIR" id="T34188">
    <property type="entry name" value="T34188"/>
</dbReference>
<dbReference type="RefSeq" id="NP_058056.2">
    <property type="nucleotide sequence ID" value="NM_016776.2"/>
</dbReference>
<dbReference type="SMR" id="Q7TPV4"/>
<dbReference type="BioGRID" id="201999">
    <property type="interactions" value="47"/>
</dbReference>
<dbReference type="ComplexPortal" id="CPX-1133">
    <property type="entry name" value="B-WICH chromatin remodelling complex"/>
</dbReference>
<dbReference type="CORUM" id="Q7TPV4"/>
<dbReference type="DIP" id="DIP-39831N"/>
<dbReference type="FunCoup" id="Q7TPV4">
    <property type="interactions" value="3312"/>
</dbReference>
<dbReference type="IntAct" id="Q7TPV4">
    <property type="interactions" value="18"/>
</dbReference>
<dbReference type="MINT" id="Q7TPV4"/>
<dbReference type="STRING" id="10090.ENSMUSP00000044827"/>
<dbReference type="GlyGen" id="Q7TPV4">
    <property type="glycosylation" value="4 sites, 2 N-linked glycans (2 sites), 1 O-linked glycan (1 site)"/>
</dbReference>
<dbReference type="iPTMnet" id="Q7TPV4"/>
<dbReference type="PhosphoSitePlus" id="Q7TPV4"/>
<dbReference type="SwissPalm" id="Q7TPV4"/>
<dbReference type="jPOST" id="Q7TPV4"/>
<dbReference type="PaxDb" id="10090-ENSMUSP00000044827"/>
<dbReference type="ProteomicsDB" id="287318"/>
<dbReference type="Pumba" id="Q7TPV4"/>
<dbReference type="Antibodypedia" id="23280">
    <property type="antibodies" value="273 antibodies from 31 providers"/>
</dbReference>
<dbReference type="DNASU" id="18432"/>
<dbReference type="Ensembl" id="ENSMUST00000045633.6">
    <property type="protein sequence ID" value="ENSMUSP00000044827.6"/>
    <property type="gene ID" value="ENSMUSG00000040463.17"/>
</dbReference>
<dbReference type="GeneID" id="18432"/>
<dbReference type="KEGG" id="mmu:18432"/>
<dbReference type="UCSC" id="uc007jyy.1">
    <property type="organism name" value="mouse"/>
</dbReference>
<dbReference type="AGR" id="MGI:106181"/>
<dbReference type="CTD" id="10514"/>
<dbReference type="MGI" id="MGI:106181">
    <property type="gene designation" value="Mybbp1a"/>
</dbReference>
<dbReference type="VEuPathDB" id="HostDB:ENSMUSG00000040463"/>
<dbReference type="eggNOG" id="KOG1926">
    <property type="taxonomic scope" value="Eukaryota"/>
</dbReference>
<dbReference type="GeneTree" id="ENSGT00390000017457"/>
<dbReference type="HOGENOM" id="CLU_005997_1_0_1"/>
<dbReference type="InParanoid" id="Q7TPV4"/>
<dbReference type="OMA" id="VWKHDDP"/>
<dbReference type="OrthoDB" id="342531at2759"/>
<dbReference type="PhylomeDB" id="Q7TPV4"/>
<dbReference type="TreeFam" id="TF317401"/>
<dbReference type="Reactome" id="R-MMU-5250924">
    <property type="pathway name" value="B-WICH complex positively regulates rRNA expression"/>
</dbReference>
<dbReference type="BioGRID-ORCS" id="18432">
    <property type="hits" value="30 hits in 83 CRISPR screens"/>
</dbReference>
<dbReference type="ChiTaRS" id="Mybbp1a">
    <property type="organism name" value="mouse"/>
</dbReference>
<dbReference type="PRO" id="PR:Q7TPV4"/>
<dbReference type="Proteomes" id="UP000000589">
    <property type="component" value="Chromosome 11"/>
</dbReference>
<dbReference type="RNAct" id="Q7TPV4">
    <property type="molecule type" value="protein"/>
</dbReference>
<dbReference type="Bgee" id="ENSMUSG00000040463">
    <property type="expression patterns" value="Expressed in embryonic post-anal tail and 276 other cell types or tissues"/>
</dbReference>
<dbReference type="ExpressionAtlas" id="Q7TPV4">
    <property type="expression patterns" value="baseline and differential"/>
</dbReference>
<dbReference type="GO" id="GO:0110016">
    <property type="term" value="C:B-WICH complex"/>
    <property type="evidence" value="ECO:0000266"/>
    <property type="project" value="ComplexPortal"/>
</dbReference>
<dbReference type="GO" id="GO:0005737">
    <property type="term" value="C:cytoplasm"/>
    <property type="evidence" value="ECO:0000314"/>
    <property type="project" value="UniProtKB"/>
</dbReference>
<dbReference type="GO" id="GO:0042564">
    <property type="term" value="C:NLS-dependent protein nuclear import complex"/>
    <property type="evidence" value="ECO:0000314"/>
    <property type="project" value="UniProtKB"/>
</dbReference>
<dbReference type="GO" id="GO:0005730">
    <property type="term" value="C:nucleolus"/>
    <property type="evidence" value="ECO:0000314"/>
    <property type="project" value="UniProtKB"/>
</dbReference>
<dbReference type="GO" id="GO:0005634">
    <property type="term" value="C:nucleus"/>
    <property type="evidence" value="ECO:0000314"/>
    <property type="project" value="UniProtKB"/>
</dbReference>
<dbReference type="GO" id="GO:0070888">
    <property type="term" value="F:E-box binding"/>
    <property type="evidence" value="ECO:0000353"/>
    <property type="project" value="UniProtKB"/>
</dbReference>
<dbReference type="GO" id="GO:0003714">
    <property type="term" value="F:transcription corepressor activity"/>
    <property type="evidence" value="ECO:0000314"/>
    <property type="project" value="UniProtKB"/>
</dbReference>
<dbReference type="GO" id="GO:0008270">
    <property type="term" value="F:zinc ion binding"/>
    <property type="evidence" value="ECO:0000304"/>
    <property type="project" value="UniProtKB"/>
</dbReference>
<dbReference type="GO" id="GO:0042149">
    <property type="term" value="P:cellular response to glucose starvation"/>
    <property type="evidence" value="ECO:0007669"/>
    <property type="project" value="Ensembl"/>
</dbReference>
<dbReference type="GO" id="GO:0006338">
    <property type="term" value="P:chromatin remodeling"/>
    <property type="evidence" value="ECO:0000303"/>
    <property type="project" value="ComplexPortal"/>
</dbReference>
<dbReference type="GO" id="GO:0032922">
    <property type="term" value="P:circadian regulation of gene expression"/>
    <property type="evidence" value="ECO:0000314"/>
    <property type="project" value="UniProtKB"/>
</dbReference>
<dbReference type="GO" id="GO:0072332">
    <property type="term" value="P:intrinsic apoptotic signaling pathway by p53 class mediator"/>
    <property type="evidence" value="ECO:0007669"/>
    <property type="project" value="Ensembl"/>
</dbReference>
<dbReference type="GO" id="GO:0045892">
    <property type="term" value="P:negative regulation of DNA-templated transcription"/>
    <property type="evidence" value="ECO:0000314"/>
    <property type="project" value="UniProtKB"/>
</dbReference>
<dbReference type="GO" id="GO:2000210">
    <property type="term" value="P:positive regulation of anoikis"/>
    <property type="evidence" value="ECO:0007669"/>
    <property type="project" value="Ensembl"/>
</dbReference>
<dbReference type="GO" id="GO:0045943">
    <property type="term" value="P:positive regulation of transcription by RNA polymerase I"/>
    <property type="evidence" value="ECO:0000303"/>
    <property type="project" value="ComplexPortal"/>
</dbReference>
<dbReference type="GO" id="GO:0045944">
    <property type="term" value="P:positive regulation of transcription by RNA polymerase II"/>
    <property type="evidence" value="ECO:0000303"/>
    <property type="project" value="ComplexPortal"/>
</dbReference>
<dbReference type="GO" id="GO:0045945">
    <property type="term" value="P:positive regulation of transcription by RNA polymerase III"/>
    <property type="evidence" value="ECO:0000266"/>
    <property type="project" value="ComplexPortal"/>
</dbReference>
<dbReference type="GO" id="GO:1903450">
    <property type="term" value="P:regulation of G1 to G0 transition"/>
    <property type="evidence" value="ECO:0007669"/>
    <property type="project" value="Ensembl"/>
</dbReference>
<dbReference type="GO" id="GO:0022904">
    <property type="term" value="P:respiratory electron transport chain"/>
    <property type="evidence" value="ECO:0000314"/>
    <property type="project" value="MGI"/>
</dbReference>
<dbReference type="GO" id="GO:0042254">
    <property type="term" value="P:ribosome biogenesis"/>
    <property type="evidence" value="ECO:0007669"/>
    <property type="project" value="UniProtKB-KW"/>
</dbReference>
<dbReference type="InterPro" id="IPR016024">
    <property type="entry name" value="ARM-type_fold"/>
</dbReference>
<dbReference type="InterPro" id="IPR007015">
    <property type="entry name" value="DNA_pol_V/MYBBP1A"/>
</dbReference>
<dbReference type="PANTHER" id="PTHR13213:SF2">
    <property type="entry name" value="MYB-BINDING PROTEIN 1A"/>
    <property type="match status" value="1"/>
</dbReference>
<dbReference type="PANTHER" id="PTHR13213">
    <property type="entry name" value="MYB-BINDING PROTEIN 1A FAMILY MEMBER"/>
    <property type="match status" value="1"/>
</dbReference>
<dbReference type="Pfam" id="PF04931">
    <property type="entry name" value="DNA_pol_phi"/>
    <property type="match status" value="1"/>
</dbReference>
<dbReference type="SUPFAM" id="SSF48371">
    <property type="entry name" value="ARM repeat"/>
    <property type="match status" value="1"/>
</dbReference>
<feature type="initiator methionine" description="Removed" evidence="11">
    <location>
        <position position="1"/>
    </location>
</feature>
<feature type="chain" id="PRO_0000096256" description="Myb-binding protein 1A">
    <location>
        <begin position="2"/>
        <end position="1344"/>
    </location>
</feature>
<feature type="region of interest" description="Disordered" evidence="2">
    <location>
        <begin position="1"/>
        <end position="24"/>
    </location>
</feature>
<feature type="region of interest" description="Interaction with MYB" evidence="8">
    <location>
        <begin position="2"/>
        <end position="580"/>
    </location>
</feature>
<feature type="region of interest" description="Disordered" evidence="2">
    <location>
        <begin position="710"/>
        <end position="751"/>
    </location>
</feature>
<feature type="region of interest" description="Disordered" evidence="2">
    <location>
        <begin position="1146"/>
        <end position="1344"/>
    </location>
</feature>
<feature type="region of interest" description="Required for nuclear and nucleolar localization" evidence="4">
    <location>
        <begin position="1152"/>
        <end position="1344"/>
    </location>
</feature>
<feature type="short sequence motif" description="Nuclear export signal 1" evidence="4">
    <location>
        <begin position="238"/>
        <end position="256"/>
    </location>
</feature>
<feature type="short sequence motif" description="Nuclear export signal 2" evidence="4">
    <location>
        <begin position="261"/>
        <end position="279"/>
    </location>
</feature>
<feature type="compositionally biased region" description="Low complexity" evidence="2">
    <location>
        <begin position="7"/>
        <end position="19"/>
    </location>
</feature>
<feature type="compositionally biased region" description="Acidic residues" evidence="2">
    <location>
        <begin position="732"/>
        <end position="747"/>
    </location>
</feature>
<feature type="compositionally biased region" description="Basic and acidic residues" evidence="2">
    <location>
        <begin position="1148"/>
        <end position="1159"/>
    </location>
</feature>
<feature type="compositionally biased region" description="Basic residues" evidence="2">
    <location>
        <begin position="1168"/>
        <end position="1185"/>
    </location>
</feature>
<feature type="compositionally biased region" description="Polar residues" evidence="2">
    <location>
        <begin position="1188"/>
        <end position="1202"/>
    </location>
</feature>
<feature type="compositionally biased region" description="Polar residues" evidence="2">
    <location>
        <begin position="1249"/>
        <end position="1258"/>
    </location>
</feature>
<feature type="compositionally biased region" description="Low complexity" evidence="2">
    <location>
        <begin position="1317"/>
        <end position="1329"/>
    </location>
</feature>
<feature type="modified residue" description="N-acetylalanine" evidence="11">
    <location>
        <position position="2"/>
    </location>
</feature>
<feature type="modified residue" description="N6-acetyllysine" evidence="1">
    <location>
        <position position="69"/>
    </location>
</feature>
<feature type="modified residue" description="N6-acetyllysine" evidence="1">
    <location>
        <position position="156"/>
    </location>
</feature>
<feature type="modified residue" description="Phosphoserine" evidence="1">
    <location>
        <position position="1160"/>
    </location>
</feature>
<feature type="modified residue" description="Phosphoserine" evidence="13">
    <location>
        <position position="1164"/>
    </location>
</feature>
<feature type="modified residue" description="Phosphoserine" evidence="1">
    <location>
        <position position="1187"/>
    </location>
</feature>
<feature type="modified residue" description="Phosphothreonine" evidence="1">
    <location>
        <position position="1191"/>
    </location>
</feature>
<feature type="modified residue" description="Phosphoserine" evidence="1">
    <location>
        <position position="1219"/>
    </location>
</feature>
<feature type="modified residue" description="Phosphoserine" evidence="13">
    <location>
        <position position="1244"/>
    </location>
</feature>
<feature type="modified residue" description="Phosphothreonine" evidence="1">
    <location>
        <position position="1251"/>
    </location>
</feature>
<feature type="modified residue" description="Phosphoserine" evidence="11 12 13">
    <location>
        <position position="1253"/>
    </location>
</feature>
<feature type="modified residue" description="Phosphothreonine" evidence="13">
    <location>
        <position position="1256"/>
    </location>
</feature>
<feature type="modified residue" description="Phosphothreonine" evidence="10 13">
    <location>
        <position position="1277"/>
    </location>
</feature>
<feature type="modified residue" description="Phosphoserine" evidence="10 12 13">
    <location>
        <position position="1280"/>
    </location>
</feature>
<feature type="modified residue" description="Phosphoserine" evidence="1">
    <location>
        <position position="1303"/>
    </location>
</feature>
<feature type="modified residue" description="Phosphoserine" evidence="1">
    <location>
        <position position="1318"/>
    </location>
</feature>
<feature type="modified residue" description="Citrulline" evidence="7">
    <location>
        <position position="1322"/>
    </location>
</feature>
<feature type="modified residue" description="Phosphoserine" evidence="13">
    <location>
        <position position="1323"/>
    </location>
</feature>
<feature type="modified residue" description="Phosphoserine" evidence="13">
    <location>
        <position position="1325"/>
    </location>
</feature>
<feature type="modified residue" description="Phosphoserine" evidence="1">
    <location>
        <position position="1329"/>
    </location>
</feature>
<feature type="cross-link" description="Glycyl lysine isopeptide (Lys-Gly) (interchain with G-Cter in SUMO2)" evidence="1">
    <location>
        <position position="1149"/>
    </location>
</feature>
<feature type="mutagenesis site" description="Reduced nuclear export; when associated with A-251." evidence="4">
    <original>L</original>
    <variation>A</variation>
    <location>
        <position position="249"/>
    </location>
</feature>
<feature type="mutagenesis site" description="Reduced nuclear export; when associated with A-249." evidence="4">
    <original>V</original>
    <variation>A</variation>
    <location>
        <position position="251"/>
    </location>
</feature>
<feature type="mutagenesis site" description="Reduced nuclear export; when associated with A-274." evidence="4">
    <original>L</original>
    <variation>A</variation>
    <location>
        <position position="272"/>
    </location>
</feature>
<feature type="mutagenesis site" description="Reduced nuclear export; when associated with A-272." evidence="4">
    <original>L</original>
    <variation>A</variation>
    <location>
        <position position="274"/>
    </location>
</feature>
<feature type="sequence conflict" description="In Ref. 1; AAC39954 and 2; AAL83748." evidence="9" ref="1 2">
    <original>R</original>
    <variation>T</variation>
    <location>
        <position position="87"/>
    </location>
</feature>
<feature type="sequence conflict" description="In Ref. 1; AAC39954." evidence="9" ref="1">
    <original>P</original>
    <variation>A</variation>
    <location>
        <position position="88"/>
    </location>
</feature>
<feature type="sequence conflict" description="In Ref. 4; AAH04078." evidence="9" ref="4">
    <original>DRNR</original>
    <variation>HASG</variation>
    <location>
        <begin position="505"/>
        <end position="508"/>
    </location>
</feature>
<feature type="sequence conflict" description="In Ref. 4; AAH52889." evidence="9" ref="4">
    <original>I</original>
    <variation>V</variation>
    <location>
        <position position="1282"/>
    </location>
</feature>
<reference key="1">
    <citation type="journal article" date="1998" name="Mol. Cell. Biol.">
        <title>Molecular cloning reveals that the p160 Myb-binding protein is a novel, predominantly nucleolar protein which may play a role in transactivation by Myb.</title>
        <authorList>
            <person name="Tavner F.J."/>
            <person name="Simpson R."/>
            <person name="Tashiro S."/>
            <person name="Favier D."/>
            <person name="Jenkins N.A."/>
            <person name="Gilbert D.J."/>
            <person name="Copeland N.G."/>
            <person name="Macmillan E.M."/>
            <person name="Lutwyche J."/>
            <person name="Keough R.A."/>
            <person name="Ishii S."/>
            <person name="Gonda T.J."/>
        </authorList>
    </citation>
    <scope>NUCLEOTIDE SEQUENCE [MRNA]</scope>
    <scope>PROTEIN SEQUENCE OF 43-53; 205-211; 286-290; 458-465 AND 488-496</scope>
    <scope>FUNCTION</scope>
    <scope>INTERACTION WITH JUN AND MYB</scope>
    <scope>SUBCELLULAR LOCATION</scope>
    <scope>TISSUE SPECIFICITY</scope>
</reference>
<reference key="2">
    <citation type="submission" date="2001-02" db="EMBL/GenBank/DDBJ databases">
        <title>Structural organization of the murine myb-binding protein p160 (Mybbp1a) gene.</title>
        <authorList>
            <person name="Keough R.A."/>
            <person name="Gonda T.J."/>
        </authorList>
    </citation>
    <scope>NUCLEOTIDE SEQUENCE [GENOMIC DNA]</scope>
</reference>
<reference key="3">
    <citation type="journal article" date="2009" name="PLoS Biol.">
        <title>Lineage-specific biology revealed by a finished genome assembly of the mouse.</title>
        <authorList>
            <person name="Church D.M."/>
            <person name="Goodstadt L."/>
            <person name="Hillier L.W."/>
            <person name="Zody M.C."/>
            <person name="Goldstein S."/>
            <person name="She X."/>
            <person name="Bult C.J."/>
            <person name="Agarwala R."/>
            <person name="Cherry J.L."/>
            <person name="DiCuccio M."/>
            <person name="Hlavina W."/>
            <person name="Kapustin Y."/>
            <person name="Meric P."/>
            <person name="Maglott D."/>
            <person name="Birtle Z."/>
            <person name="Marques A.C."/>
            <person name="Graves T."/>
            <person name="Zhou S."/>
            <person name="Teague B."/>
            <person name="Potamousis K."/>
            <person name="Churas C."/>
            <person name="Place M."/>
            <person name="Herschleb J."/>
            <person name="Runnheim R."/>
            <person name="Forrest D."/>
            <person name="Amos-Landgraf J."/>
            <person name="Schwartz D.C."/>
            <person name="Cheng Z."/>
            <person name="Lindblad-Toh K."/>
            <person name="Eichler E.E."/>
            <person name="Ponting C.P."/>
        </authorList>
    </citation>
    <scope>NUCLEOTIDE SEQUENCE [LARGE SCALE GENOMIC DNA]</scope>
    <source>
        <strain>C57BL/6J</strain>
    </source>
</reference>
<reference key="4">
    <citation type="journal article" date="2004" name="Genome Res.">
        <title>The status, quality, and expansion of the NIH full-length cDNA project: the Mammalian Gene Collection (MGC).</title>
        <authorList>
            <consortium name="The MGC Project Team"/>
        </authorList>
    </citation>
    <scope>NUCLEOTIDE SEQUENCE [LARGE SCALE MRNA]</scope>
    <source>
        <strain>C3H/He</strain>
        <tissue>Eye</tissue>
        <tissue>Mammary gland</tissue>
        <tissue>Osteoblast</tissue>
    </source>
</reference>
<reference key="5">
    <citation type="journal article" date="2002" name="J. Biol. Chem.">
        <title>Myb-binding protein 1a augments AhR-dependent gene expression.</title>
        <authorList>
            <person name="Jones L.C."/>
            <person name="Okino S.T."/>
            <person name="Gonda T.J."/>
            <person name="Whitlock J.P. Jr."/>
        </authorList>
    </citation>
    <scope>PARTIAL PROTEIN SEQUENCE</scope>
    <scope>FUNCTION</scope>
    <scope>INTERACTION WITH AHR</scope>
</reference>
<reference key="6">
    <citation type="journal article" date="2003" name="Exp. Cell Res.">
        <title>Myb-binding protein 1a is a nucleocytoplasmic shuttling protein that utilizes CRM1-dependent and independent nuclear export pathways.</title>
        <authorList>
            <person name="Keough R.A."/>
            <person name="Macmillan E.M."/>
            <person name="Lutwyche J.K."/>
            <person name="Gardner J.M."/>
            <person name="Tavner F.J."/>
            <person name="Jans D.A."/>
            <person name="Henderson B.R."/>
            <person name="Gonda T.J."/>
        </authorList>
    </citation>
    <scope>SUBCELLULAR LOCATION</scope>
    <scope>INTERACTION WITH KPNA2</scope>
    <scope>MUTAGENESIS OF LEU-249; VAL-251; LEU-272 AND LEU-274</scope>
    <scope>DOMAINS NES AND NLS</scope>
</reference>
<reference key="7">
    <citation type="journal article" date="2004" name="Genes Dev.">
        <title>Suppression of mitochondrial respiration through recruitment of p160 myb binding protein to PGC-1alpha: modulation by p38 MAPK.</title>
        <authorList>
            <person name="Fan M."/>
            <person name="Rhee J."/>
            <person name="St Pierre J."/>
            <person name="Handschin C."/>
            <person name="Puigserver P."/>
            <person name="Lin J."/>
            <person name="Jaeger S."/>
            <person name="Erdjument-Bromage H."/>
            <person name="Tempst P."/>
            <person name="Spiegelman B.M."/>
        </authorList>
    </citation>
    <scope>FUNCTION</scope>
    <scope>IDENTIFICATION BY MASS SPECTROMETRY</scope>
    <scope>INTERACTION WITH PPARGC1A</scope>
</reference>
<reference key="8">
    <citation type="journal article" date="2004" name="Mol. Cell. Proteomics">
        <title>Phosphoproteomic analysis of the developing mouse brain.</title>
        <authorList>
            <person name="Ballif B.A."/>
            <person name="Villen J."/>
            <person name="Beausoleil S.A."/>
            <person name="Schwartz D."/>
            <person name="Gygi S.P."/>
        </authorList>
    </citation>
    <scope>IDENTIFICATION BY MASS SPECTROMETRY [LARGE SCALE ANALYSIS]</scope>
    <source>
        <tissue>Embryonic brain</tissue>
    </source>
</reference>
<reference key="9">
    <citation type="journal article" date="2006" name="Mol. Cell. Proteomics">
        <title>Comprehensive identification of phosphorylation sites in postsynaptic density preparations.</title>
        <authorList>
            <person name="Trinidad J.C."/>
            <person name="Specht C.G."/>
            <person name="Thalhammer A."/>
            <person name="Schoepfer R."/>
            <person name="Burlingame A.L."/>
        </authorList>
    </citation>
    <scope>IDENTIFICATION BY MASS SPECTROMETRY [LARGE SCALE ANALYSIS]</scope>
    <source>
        <tissue>Brain</tissue>
    </source>
</reference>
<reference key="10">
    <citation type="journal article" date="2007" name="Proc. Natl. Acad. Sci. U.S.A.">
        <title>Large-scale phosphorylation analysis of mouse liver.</title>
        <authorList>
            <person name="Villen J."/>
            <person name="Beausoleil S.A."/>
            <person name="Gerber S.A."/>
            <person name="Gygi S.P."/>
        </authorList>
    </citation>
    <scope>PHOSPHORYLATION [LARGE SCALE ANALYSIS] AT THR-1277 AND SER-1280</scope>
    <scope>IDENTIFICATION BY MASS SPECTROMETRY [LARGE SCALE ANALYSIS]</scope>
    <source>
        <tissue>Liver</tissue>
    </source>
</reference>
<reference key="11">
    <citation type="journal article" date="2009" name="Immunity">
        <title>The phagosomal proteome in interferon-gamma-activated macrophages.</title>
        <authorList>
            <person name="Trost M."/>
            <person name="English L."/>
            <person name="Lemieux S."/>
            <person name="Courcelles M."/>
            <person name="Desjardins M."/>
            <person name="Thibault P."/>
        </authorList>
    </citation>
    <scope>PHOSPHORYLATION [LARGE SCALE ANALYSIS] AT SER-1253 AND SER-1280</scope>
    <scope>IDENTIFICATION BY MASS SPECTROMETRY [LARGE SCALE ANALYSIS]</scope>
</reference>
<reference key="12">
    <citation type="journal article" date="2009" name="Mol. Cell. Proteomics">
        <title>Large scale localization of protein phosphorylation by use of electron capture dissociation mass spectrometry.</title>
        <authorList>
            <person name="Sweet S.M."/>
            <person name="Bailey C.M."/>
            <person name="Cunningham D.L."/>
            <person name="Heath J.K."/>
            <person name="Cooper H.J."/>
        </authorList>
    </citation>
    <scope>ACETYLATION [LARGE SCALE ANALYSIS] AT ALA-2</scope>
    <scope>PHOSPHORYLATION [LARGE SCALE ANALYSIS] AT SER-1253</scope>
    <scope>CLEAVAGE OF INITIATOR METHIONINE [LARGE SCALE ANALYSIS]</scope>
    <scope>IDENTIFICATION BY MASS SPECTROMETRY [LARGE SCALE ANALYSIS]</scope>
    <source>
        <tissue>Embryonic fibroblast</tissue>
    </source>
</reference>
<reference key="13">
    <citation type="journal article" date="2009" name="Nucleic Acids Res.">
        <title>Molecular characterization of Mybbp1a as a co-repressor on the Period2 promoter.</title>
        <authorList>
            <person name="Hara Y."/>
            <person name="Onishi Y."/>
            <person name="Oishi K."/>
            <person name="Miyazaki K."/>
            <person name="Fukamizu A."/>
            <person name="Ishida N."/>
        </authorList>
    </citation>
    <scope>FUNCTION</scope>
    <scope>SUBCELLULAR LOCATION</scope>
    <scope>INTERACTION WITH CLOCK AND CRY1</scope>
</reference>
<reference key="14">
    <citation type="journal article" date="2010" name="Cell">
        <title>A tissue-specific atlas of mouse protein phosphorylation and expression.</title>
        <authorList>
            <person name="Huttlin E.L."/>
            <person name="Jedrychowski M.P."/>
            <person name="Elias J.E."/>
            <person name="Goswami T."/>
            <person name="Rad R."/>
            <person name="Beausoleil S.A."/>
            <person name="Villen J."/>
            <person name="Haas W."/>
            <person name="Sowa M.E."/>
            <person name="Gygi S.P."/>
        </authorList>
    </citation>
    <scope>PHOSPHORYLATION [LARGE SCALE ANALYSIS] AT SER-1164; SER-1244; SER-1253; THR-1256; THR-1277; SER-1280; SER-1323 AND SER-1325</scope>
    <scope>IDENTIFICATION BY MASS SPECTROMETRY [LARGE SCALE ANALYSIS]</scope>
    <source>
        <tissue>Brain</tissue>
        <tissue>Brown adipose tissue</tissue>
        <tissue>Heart</tissue>
        <tissue>Kidney</tissue>
        <tissue>Liver</tissue>
        <tissue>Lung</tissue>
        <tissue>Pancreas</tissue>
        <tissue>Spleen</tissue>
        <tissue>Testis</tissue>
    </source>
</reference>
<reference key="15">
    <citation type="journal article" date="2014" name="Nature">
        <title>Citrullination regulates pluripotency and histone H1 binding to chromatin.</title>
        <authorList>
            <person name="Christophorou M.A."/>
            <person name="Castelo-Branco G."/>
            <person name="Halley-Stott R.P."/>
            <person name="Oliveira C.S."/>
            <person name="Loos R."/>
            <person name="Radzisheuskaya A."/>
            <person name="Mowen K.A."/>
            <person name="Bertone P."/>
            <person name="Silva J.C."/>
            <person name="Zernicka-Goetz M."/>
            <person name="Nielsen M.L."/>
            <person name="Gurdon J.B."/>
            <person name="Kouzarides T."/>
        </authorList>
    </citation>
    <scope>CITRULLINATION AT ARG-1322</scope>
</reference>